<sequence length="1029" mass="114996">MKMADAKQKRNEQLKRWIGSETDLEPPVVKRQKTKVKFDDGAVFLAACSSGDTDEVLKLLHRGADINYANVDGLTALHQACIDDNVDMVKFLVENGANINQPDNEGWIPLHAAASCGYLDIAEFLIGQGAHVGAVNSEGDTPLDIAEEEAMEELLQNEVNRQGVDIEAARKEEERVMLRDARQWLNSGHISDVRHAKSGGTALHVAAAKGYTEVLKLLIQAGYDVNIKDYDGWTPLHAAAHWGKEEACRILVDNLCDMETVNKVGQTAFDVADEDILGYLEELQKKQTLLHSEKRDKKSPLIESTANMENNQPQKAFKNKETLIIEPEKNASRIESLEHEKADEEEEGKKDESSCSSEEDEEDDSESEAETDKTKPMASVSNAHTSSTQAAPAAVTAPTLSSNQGTPTSPVKKFPISTTKISPKEEERKDESPASWRLGLRKTGSYGALAEISASKEAQKEKDTAGVMRSASSPRLSSSLDNKEKEKDNKGTRLAYVTPTIPRRLASTSDIEEKENRESSSLRTSSSYTRRKWEDDLKKNSSINEGSTYHRSCSFGRRQDDLISCSVPSTTSTPTVTSAAGLQRSLPSSTSTAAKTPPGSSSAGTQSSTSNRLWAEDSTEKEKDSAPTAVTIPVAPTVVNAAAPSTTTLTTTTAGTVSEVRERRRSYLTPVRDEESESQRKARSRQARQSRRSTQGVTLTDLQEAEKTIGRSRSTRTREQENEEKEKEEKEKQDKEKQEEKKESEASREDEYKQKYSRTYDETYTRYRPVSTSSSSAPSSSSLSTLGSTLYASSQLNRPNSLVGITSAYSRGLAKENEREGEKKEEEKEGEDKSQPKSIRERRRPREKRRSTGVSFWTQDSDENEQERQSDTEDGSSKRETQTDSVSRYDSSSTSSSDRYDSLLGRSASYSYLEDRKPYSSRLEKDDSTDFKKLYEQILAENEKLKAQLHDTNMELTDLKLQLEKATQRQERFADRSQLEMEKRERRALERRISEMEEELKMLPDLKADNQRLKDENGALIRVISKLSK</sequence>
<gene>
    <name evidence="8" type="primary">Ppp1r12a</name>
    <name evidence="8" type="synonym">Mypt1</name>
</gene>
<feature type="chain" id="PRO_0000067026" description="Protein phosphatase 1 regulatory subunit 12A">
    <location>
        <begin position="1"/>
        <end position="1029"/>
    </location>
</feature>
<feature type="repeat" description="ANK 1">
    <location>
        <begin position="39"/>
        <end position="68"/>
    </location>
</feature>
<feature type="repeat" description="ANK 2">
    <location>
        <begin position="72"/>
        <end position="101"/>
    </location>
</feature>
<feature type="repeat" description="ANK 3">
    <location>
        <begin position="105"/>
        <end position="134"/>
    </location>
</feature>
<feature type="repeat" description="ANK 4">
    <location>
        <begin position="138"/>
        <end position="164"/>
    </location>
</feature>
<feature type="repeat" description="ANK 5">
    <location>
        <begin position="198"/>
        <end position="227"/>
    </location>
</feature>
<feature type="repeat" description="ANK 6">
    <location>
        <begin position="231"/>
        <end position="260"/>
    </location>
</feature>
<feature type="region of interest" description="Disordered" evidence="4">
    <location>
        <begin position="290"/>
        <end position="786"/>
    </location>
</feature>
<feature type="region of interest" description="Interaction with ROCK2" evidence="1">
    <location>
        <begin position="680"/>
        <end position="863"/>
    </location>
</feature>
<feature type="region of interest" description="Disordered" evidence="4">
    <location>
        <begin position="808"/>
        <end position="927"/>
    </location>
</feature>
<feature type="short sequence motif" description="KVKF motif">
    <location>
        <begin position="35"/>
        <end position="38"/>
    </location>
</feature>
<feature type="compositionally biased region" description="Basic and acidic residues" evidence="4">
    <location>
        <begin position="291"/>
        <end position="300"/>
    </location>
</feature>
<feature type="compositionally biased region" description="Polar residues" evidence="4">
    <location>
        <begin position="302"/>
        <end position="314"/>
    </location>
</feature>
<feature type="compositionally biased region" description="Basic and acidic residues" evidence="4">
    <location>
        <begin position="318"/>
        <end position="353"/>
    </location>
</feature>
<feature type="compositionally biased region" description="Acidic residues" evidence="4">
    <location>
        <begin position="357"/>
        <end position="369"/>
    </location>
</feature>
<feature type="compositionally biased region" description="Low complexity" evidence="4">
    <location>
        <begin position="385"/>
        <end position="402"/>
    </location>
</feature>
<feature type="compositionally biased region" description="Basic and acidic residues" evidence="4">
    <location>
        <begin position="422"/>
        <end position="432"/>
    </location>
</feature>
<feature type="compositionally biased region" description="Low complexity" evidence="4">
    <location>
        <begin position="469"/>
        <end position="480"/>
    </location>
</feature>
<feature type="compositionally biased region" description="Basic and acidic residues" evidence="4">
    <location>
        <begin position="481"/>
        <end position="491"/>
    </location>
</feature>
<feature type="compositionally biased region" description="Polar residues" evidence="4">
    <location>
        <begin position="540"/>
        <end position="551"/>
    </location>
</feature>
<feature type="compositionally biased region" description="Low complexity" evidence="4">
    <location>
        <begin position="564"/>
        <end position="578"/>
    </location>
</feature>
<feature type="compositionally biased region" description="Polar residues" evidence="4">
    <location>
        <begin position="585"/>
        <end position="594"/>
    </location>
</feature>
<feature type="compositionally biased region" description="Low complexity" evidence="4">
    <location>
        <begin position="596"/>
        <end position="610"/>
    </location>
</feature>
<feature type="compositionally biased region" description="Basic and acidic residues" evidence="4">
    <location>
        <begin position="614"/>
        <end position="625"/>
    </location>
</feature>
<feature type="compositionally biased region" description="Low complexity" evidence="4">
    <location>
        <begin position="626"/>
        <end position="656"/>
    </location>
</feature>
<feature type="compositionally biased region" description="Basic and acidic residues" evidence="4">
    <location>
        <begin position="671"/>
        <end position="680"/>
    </location>
</feature>
<feature type="compositionally biased region" description="Basic residues" evidence="4">
    <location>
        <begin position="681"/>
        <end position="691"/>
    </location>
</feature>
<feature type="compositionally biased region" description="Basic and acidic residues" evidence="4">
    <location>
        <begin position="716"/>
        <end position="765"/>
    </location>
</feature>
<feature type="compositionally biased region" description="Low complexity" evidence="4">
    <location>
        <begin position="771"/>
        <end position="786"/>
    </location>
</feature>
<feature type="compositionally biased region" description="Basic and acidic residues" evidence="4">
    <location>
        <begin position="813"/>
        <end position="839"/>
    </location>
</feature>
<feature type="compositionally biased region" description="Basic residues" evidence="4">
    <location>
        <begin position="840"/>
        <end position="851"/>
    </location>
</feature>
<feature type="compositionally biased region" description="Basic and acidic residues" evidence="4">
    <location>
        <begin position="866"/>
        <end position="882"/>
    </location>
</feature>
<feature type="compositionally biased region" description="Low complexity" evidence="4">
    <location>
        <begin position="883"/>
        <end position="897"/>
    </location>
</feature>
<feature type="compositionally biased region" description="Basic and acidic residues" evidence="4">
    <location>
        <begin position="913"/>
        <end position="927"/>
    </location>
</feature>
<feature type="modified residue" description="(3S)-3-hydroxyasparagine; by HIF1AN" evidence="1">
    <location>
        <position position="67"/>
    </location>
</feature>
<feature type="modified residue" description="(3S)-3-hydroxyasparagine; by HIF1AN" evidence="1">
    <location>
        <position position="100"/>
    </location>
</feature>
<feature type="modified residue" description="(3S)-3-hydroxyasparagine; by HIF1AN" evidence="1">
    <location>
        <position position="226"/>
    </location>
</feature>
<feature type="modified residue" description="Phosphoserine" evidence="10">
    <location>
        <position position="299"/>
    </location>
</feature>
<feature type="modified residue" description="Phosphoserine" evidence="2">
    <location>
        <position position="422"/>
    </location>
</feature>
<feature type="modified residue" description="Phosphoserine" evidence="2">
    <location>
        <position position="432"/>
    </location>
</feature>
<feature type="modified residue" description="Phosphothreonine" evidence="2">
    <location>
        <position position="443"/>
    </location>
</feature>
<feature type="modified residue" description="Phosphoserine; by NUAK1" evidence="9 10">
    <location>
        <position position="445"/>
    </location>
</feature>
<feature type="modified residue" description="Phosphotyrosine" evidence="10">
    <location>
        <position position="446"/>
    </location>
</feature>
<feature type="modified residue" description="Phosphoserine; by NUAK1" evidence="2">
    <location>
        <position position="472"/>
    </location>
</feature>
<feature type="modified residue" description="Phosphoserine; by CDK1" evidence="2">
    <location>
        <position position="473"/>
    </location>
</feature>
<feature type="modified residue" description="Phosphoserine" evidence="2">
    <location>
        <position position="477"/>
    </location>
</feature>
<feature type="modified residue" description="Phosphoserine" evidence="2">
    <location>
        <position position="507"/>
    </location>
</feature>
<feature type="modified residue" description="Phosphoserine" evidence="2">
    <location>
        <position position="509"/>
    </location>
</feature>
<feature type="modified residue" description="Phosphoserine" evidence="2">
    <location>
        <position position="601"/>
    </location>
</feature>
<feature type="modified residue" description="Phosphoserine" evidence="2">
    <location>
        <position position="618"/>
    </location>
</feature>
<feature type="modified residue" description="Phosphoserine; by PKA and PKG; in vitro" evidence="2">
    <location>
        <position position="690"/>
    </location>
</feature>
<feature type="modified residue" description="Phosphoserine; by PKA and PKG; in vitro" evidence="2">
    <location>
        <position position="693"/>
    </location>
</feature>
<feature type="modified residue" description="Phosphothreonine; by ROCK1, ROCK2, CDC42BP, ZIPK/DAPK3 and RAF1" evidence="2">
    <location>
        <position position="694"/>
    </location>
</feature>
<feature type="modified residue" description="Phosphoserine" evidence="10">
    <location>
        <position position="801"/>
    </location>
</feature>
<feature type="modified residue" description="Phosphoserine; by ROCK2" evidence="2">
    <location>
        <position position="851"/>
    </location>
</feature>
<feature type="modified residue" description="Phosphoserine" evidence="10">
    <location>
        <position position="861"/>
    </location>
</feature>
<feature type="modified residue" description="Phosphoserine" evidence="10">
    <location>
        <position position="870"/>
    </location>
</feature>
<feature type="modified residue" description="Phosphoserine" evidence="2">
    <location>
        <position position="902"/>
    </location>
</feature>
<feature type="modified residue" description="Phosphoserine" evidence="2">
    <location>
        <position position="907"/>
    </location>
</feature>
<feature type="modified residue" description="Phosphoserine; by NUAK1" evidence="2">
    <location>
        <position position="909"/>
    </location>
</feature>
<feature type="modified residue" description="Phosphoserine" evidence="10">
    <location>
        <position position="994"/>
    </location>
</feature>
<feature type="splice variant" id="VSP_038478" description="In isoform 2." evidence="7">
    <original>ERRALERRISEMEEELKMLPDLKADNQRLKDENGALIRVISKLSK</original>
    <variation>VAGKSQYLLGGTKSSRKKNI</variation>
    <location>
        <begin position="985"/>
        <end position="1029"/>
    </location>
</feature>
<dbReference type="EMBL" id="AK035230">
    <property type="protein sequence ID" value="BAC28990.1"/>
    <property type="molecule type" value="mRNA"/>
</dbReference>
<dbReference type="EMBL" id="AK004785">
    <property type="protein sequence ID" value="BAB23563.1"/>
    <property type="molecule type" value="mRNA"/>
</dbReference>
<dbReference type="EMBL" id="CH466539">
    <property type="protein sequence ID" value="EDL21703.1"/>
    <property type="molecule type" value="Genomic_DNA"/>
</dbReference>
<dbReference type="EMBL" id="BC125381">
    <property type="protein sequence ID" value="AAI25382.1"/>
    <property type="molecule type" value="mRNA"/>
</dbReference>
<dbReference type="EMBL" id="BC137630">
    <property type="protein sequence ID" value="AAI37631.1"/>
    <property type="molecule type" value="mRNA"/>
</dbReference>
<dbReference type="EMBL" id="AB042280">
    <property type="protein sequence ID" value="BAB39108.1"/>
    <property type="molecule type" value="Genomic_DNA"/>
</dbReference>
<dbReference type="CCDS" id="CCDS36052.1">
    <molecule id="Q9DBR7-2"/>
</dbReference>
<dbReference type="CCDS" id="CCDS88083.1">
    <molecule id="Q9DBR7-1"/>
</dbReference>
<dbReference type="RefSeq" id="NP_001355665.1">
    <molecule id="Q9DBR7-1"/>
    <property type="nucleotide sequence ID" value="NM_001368736.1"/>
</dbReference>
<dbReference type="RefSeq" id="NP_082168.1">
    <molecule id="Q9DBR7-2"/>
    <property type="nucleotide sequence ID" value="NM_027892.3"/>
</dbReference>
<dbReference type="RefSeq" id="XP_006513389.1">
    <property type="nucleotide sequence ID" value="XM_006513326.3"/>
</dbReference>
<dbReference type="BMRB" id="Q9DBR7"/>
<dbReference type="SMR" id="Q9DBR7"/>
<dbReference type="BioGRID" id="201677">
    <property type="interactions" value="29"/>
</dbReference>
<dbReference type="DIP" id="DIP-29982N"/>
<dbReference type="FunCoup" id="Q9DBR7">
    <property type="interactions" value="3825"/>
</dbReference>
<dbReference type="IntAct" id="Q9DBR7">
    <property type="interactions" value="8"/>
</dbReference>
<dbReference type="MINT" id="Q9DBR7"/>
<dbReference type="STRING" id="10090.ENSMUSP00000069257"/>
<dbReference type="GlyGen" id="Q9DBR7">
    <property type="glycosylation" value="16 sites, 1 N-linked glycan (1 site), 1 O-linked glycan (15 sites)"/>
</dbReference>
<dbReference type="iPTMnet" id="Q9DBR7"/>
<dbReference type="PhosphoSitePlus" id="Q9DBR7"/>
<dbReference type="SwissPalm" id="Q9DBR7"/>
<dbReference type="jPOST" id="Q9DBR7"/>
<dbReference type="PaxDb" id="10090-ENSMUSP00000069257"/>
<dbReference type="PeptideAtlas" id="Q9DBR7"/>
<dbReference type="ProteomicsDB" id="287660">
    <molecule id="Q9DBR7-1"/>
</dbReference>
<dbReference type="ProteomicsDB" id="287661">
    <molecule id="Q9DBR7-2"/>
</dbReference>
<dbReference type="Pumba" id="Q9DBR7"/>
<dbReference type="Antibodypedia" id="29770">
    <property type="antibodies" value="606 antibodies from 37 providers"/>
</dbReference>
<dbReference type="Ensembl" id="ENSMUST00000070663.6">
    <molecule id="Q9DBR7-2"/>
    <property type="protein sequence ID" value="ENSMUSP00000069257.6"/>
    <property type="gene ID" value="ENSMUSG00000019907.11"/>
</dbReference>
<dbReference type="Ensembl" id="ENSMUST00000219263.2">
    <molecule id="Q9DBR7-1"/>
    <property type="protein sequence ID" value="ENSMUSP00000151842.2"/>
    <property type="gene ID" value="ENSMUSG00000019907.11"/>
</dbReference>
<dbReference type="GeneID" id="17931"/>
<dbReference type="KEGG" id="mmu:17931"/>
<dbReference type="UCSC" id="uc007gzc.1">
    <molecule id="Q9DBR7-2"/>
    <property type="organism name" value="mouse"/>
</dbReference>
<dbReference type="UCSC" id="uc007gzd.1">
    <molecule id="Q9DBR7-1"/>
    <property type="organism name" value="mouse"/>
</dbReference>
<dbReference type="AGR" id="MGI:1309528"/>
<dbReference type="CTD" id="4659"/>
<dbReference type="MGI" id="MGI:1309528">
    <property type="gene designation" value="Ppp1r12a"/>
</dbReference>
<dbReference type="VEuPathDB" id="HostDB:ENSMUSG00000019907"/>
<dbReference type="eggNOG" id="KOG0505">
    <property type="taxonomic scope" value="Eukaryota"/>
</dbReference>
<dbReference type="GeneTree" id="ENSGT00940000156120"/>
<dbReference type="HOGENOM" id="CLU_000134_54_0_1"/>
<dbReference type="InParanoid" id="Q9DBR7"/>
<dbReference type="OMA" id="MENHVDK"/>
<dbReference type="PhylomeDB" id="Q9DBR7"/>
<dbReference type="TreeFam" id="TF105543"/>
<dbReference type="BRENDA" id="3.1.3.53">
    <property type="organism ID" value="3474"/>
</dbReference>
<dbReference type="Reactome" id="R-MMU-2565942">
    <property type="pathway name" value="Regulation of PLK1 Activity at G2/M Transition"/>
</dbReference>
<dbReference type="Reactome" id="R-MMU-5625740">
    <property type="pathway name" value="RHO GTPases activate PKNs"/>
</dbReference>
<dbReference type="Reactome" id="R-MMU-5627123">
    <property type="pathway name" value="RHO GTPases activate PAKs"/>
</dbReference>
<dbReference type="BioGRID-ORCS" id="17931">
    <property type="hits" value="25 hits in 79 CRISPR screens"/>
</dbReference>
<dbReference type="CD-CODE" id="CE726F99">
    <property type="entry name" value="Postsynaptic density"/>
</dbReference>
<dbReference type="ChiTaRS" id="Ppp1r12a">
    <property type="organism name" value="mouse"/>
</dbReference>
<dbReference type="PRO" id="PR:Q9DBR7"/>
<dbReference type="Proteomes" id="UP000000589">
    <property type="component" value="Chromosome 10"/>
</dbReference>
<dbReference type="RNAct" id="Q9DBR7">
    <property type="molecule type" value="protein"/>
</dbReference>
<dbReference type="Bgee" id="ENSMUSG00000019907">
    <property type="expression patterns" value="Expressed in ascending aorta and 225 other cell types or tissues"/>
</dbReference>
<dbReference type="ExpressionAtlas" id="Q9DBR7">
    <property type="expression patterns" value="baseline and differential"/>
</dbReference>
<dbReference type="GO" id="GO:0031672">
    <property type="term" value="C:A band"/>
    <property type="evidence" value="ECO:0000314"/>
    <property type="project" value="UniProtKB"/>
</dbReference>
<dbReference type="GO" id="GO:0005813">
    <property type="term" value="C:centrosome"/>
    <property type="evidence" value="ECO:0000250"/>
    <property type="project" value="UniProtKB"/>
</dbReference>
<dbReference type="GO" id="GO:0005829">
    <property type="term" value="C:cytosol"/>
    <property type="evidence" value="ECO:0007669"/>
    <property type="project" value="Ensembl"/>
</dbReference>
<dbReference type="GO" id="GO:0000776">
    <property type="term" value="C:kinetochore"/>
    <property type="evidence" value="ECO:0000250"/>
    <property type="project" value="UniProtKB"/>
</dbReference>
<dbReference type="GO" id="GO:0005730">
    <property type="term" value="C:nucleolus"/>
    <property type="evidence" value="ECO:0007669"/>
    <property type="project" value="Ensembl"/>
</dbReference>
<dbReference type="GO" id="GO:0005886">
    <property type="term" value="C:plasma membrane"/>
    <property type="evidence" value="ECO:0007669"/>
    <property type="project" value="Ensembl"/>
</dbReference>
<dbReference type="GO" id="GO:0072357">
    <property type="term" value="C:PTW/PP1 phosphatase complex"/>
    <property type="evidence" value="ECO:0000250"/>
    <property type="project" value="UniProtKB"/>
</dbReference>
<dbReference type="GO" id="GO:0001725">
    <property type="term" value="C:stress fiber"/>
    <property type="evidence" value="ECO:0007669"/>
    <property type="project" value="UniProtKB-SubCell"/>
</dbReference>
<dbReference type="GO" id="GO:0030018">
    <property type="term" value="C:Z disc"/>
    <property type="evidence" value="ECO:0000314"/>
    <property type="project" value="UniProtKB"/>
</dbReference>
<dbReference type="GO" id="GO:0071889">
    <property type="term" value="F:14-3-3 protein binding"/>
    <property type="evidence" value="ECO:0000250"/>
    <property type="project" value="UniProtKB"/>
</dbReference>
<dbReference type="GO" id="GO:0004857">
    <property type="term" value="F:enzyme inhibitor activity"/>
    <property type="evidence" value="ECO:0000250"/>
    <property type="project" value="UniProtKB"/>
</dbReference>
<dbReference type="GO" id="GO:0019208">
    <property type="term" value="F:phosphatase regulator activity"/>
    <property type="evidence" value="ECO:0000250"/>
    <property type="project" value="UniProtKB"/>
</dbReference>
<dbReference type="GO" id="GO:0019901">
    <property type="term" value="F:protein kinase binding"/>
    <property type="evidence" value="ECO:0007669"/>
    <property type="project" value="Ensembl"/>
</dbReference>
<dbReference type="GO" id="GO:0071466">
    <property type="term" value="P:cellular response to xenobiotic stimulus"/>
    <property type="evidence" value="ECO:0000314"/>
    <property type="project" value="MGI"/>
</dbReference>
<dbReference type="GO" id="GO:0007098">
    <property type="term" value="P:centrosome cycle"/>
    <property type="evidence" value="ECO:0000250"/>
    <property type="project" value="UniProtKB"/>
</dbReference>
<dbReference type="GO" id="GO:0000278">
    <property type="term" value="P:mitotic cell cycle"/>
    <property type="evidence" value="ECO:0000250"/>
    <property type="project" value="UniProtKB"/>
</dbReference>
<dbReference type="GO" id="GO:0043086">
    <property type="term" value="P:negative regulation of catalytic activity"/>
    <property type="evidence" value="ECO:0000250"/>
    <property type="project" value="UniProtKB"/>
</dbReference>
<dbReference type="GO" id="GO:0045944">
    <property type="term" value="P:positive regulation of transcription by RNA polymerase II"/>
    <property type="evidence" value="ECO:0000250"/>
    <property type="project" value="UniProtKB"/>
</dbReference>
<dbReference type="GO" id="GO:0030155">
    <property type="term" value="P:regulation of cell adhesion"/>
    <property type="evidence" value="ECO:0000250"/>
    <property type="project" value="UniProtKB"/>
</dbReference>
<dbReference type="GO" id="GO:0046822">
    <property type="term" value="P:regulation of nucleocytoplasmic transport"/>
    <property type="evidence" value="ECO:0000315"/>
    <property type="project" value="MGI"/>
</dbReference>
<dbReference type="GO" id="GO:0007165">
    <property type="term" value="P:signal transduction"/>
    <property type="evidence" value="ECO:0007669"/>
    <property type="project" value="InterPro"/>
</dbReference>
<dbReference type="CDD" id="cd21944">
    <property type="entry name" value="IPD_MYPT1"/>
    <property type="match status" value="1"/>
</dbReference>
<dbReference type="FunFam" id="1.25.40.20:FF:000004">
    <property type="entry name" value="Phosphatase 1 regulatory subunit 12A"/>
    <property type="match status" value="1"/>
</dbReference>
<dbReference type="FunFam" id="1.25.40.20:FF:000876">
    <property type="entry name" value="Protein phosphatase 1 regulatory subunit 12A"/>
    <property type="match status" value="1"/>
</dbReference>
<dbReference type="Gene3D" id="6.10.140.390">
    <property type="match status" value="1"/>
</dbReference>
<dbReference type="Gene3D" id="6.10.250.1820">
    <property type="match status" value="1"/>
</dbReference>
<dbReference type="Gene3D" id="1.25.40.20">
    <property type="entry name" value="Ankyrin repeat-containing domain"/>
    <property type="match status" value="2"/>
</dbReference>
<dbReference type="InterPro" id="IPR002110">
    <property type="entry name" value="Ankyrin_rpt"/>
</dbReference>
<dbReference type="InterPro" id="IPR036770">
    <property type="entry name" value="Ankyrin_rpt-contain_sf"/>
</dbReference>
<dbReference type="InterPro" id="IPR017401">
    <property type="entry name" value="MYPT1/MYPT2/Mbs85"/>
</dbReference>
<dbReference type="InterPro" id="IPR051226">
    <property type="entry name" value="PP1_Regulatory_Subunit"/>
</dbReference>
<dbReference type="InterPro" id="IPR031775">
    <property type="entry name" value="PRKG1_interact"/>
</dbReference>
<dbReference type="PANTHER" id="PTHR24179">
    <property type="entry name" value="PROTEIN PHOSPHATASE 1 REGULATORY SUBUNIT 12"/>
    <property type="match status" value="1"/>
</dbReference>
<dbReference type="PANTHER" id="PTHR24179:SF20">
    <property type="entry name" value="PROTEIN PHOSPHATASE 1 REGULATORY SUBUNIT 12A"/>
    <property type="match status" value="1"/>
</dbReference>
<dbReference type="Pfam" id="PF12796">
    <property type="entry name" value="Ank_2"/>
    <property type="match status" value="2"/>
</dbReference>
<dbReference type="Pfam" id="PF15898">
    <property type="entry name" value="PRKG1_interact"/>
    <property type="match status" value="1"/>
</dbReference>
<dbReference type="PIRSF" id="PIRSF038141">
    <property type="entry name" value="PP1_12ABC_vert"/>
    <property type="match status" value="1"/>
</dbReference>
<dbReference type="PRINTS" id="PR01415">
    <property type="entry name" value="ANKYRIN"/>
</dbReference>
<dbReference type="SMART" id="SM00248">
    <property type="entry name" value="ANK"/>
    <property type="match status" value="6"/>
</dbReference>
<dbReference type="SUPFAM" id="SSF48403">
    <property type="entry name" value="Ankyrin repeat"/>
    <property type="match status" value="1"/>
</dbReference>
<dbReference type="PROSITE" id="PS50297">
    <property type="entry name" value="ANK_REP_REGION"/>
    <property type="match status" value="1"/>
</dbReference>
<dbReference type="PROSITE" id="PS50088">
    <property type="entry name" value="ANK_REPEAT"/>
    <property type="match status" value="4"/>
</dbReference>
<evidence type="ECO:0000250" key="1"/>
<evidence type="ECO:0000250" key="2">
    <source>
        <dbReference type="UniProtKB" id="O14974"/>
    </source>
</evidence>
<evidence type="ECO:0000250" key="3">
    <source>
        <dbReference type="UniProtKB" id="Q10728"/>
    </source>
</evidence>
<evidence type="ECO:0000256" key="4">
    <source>
        <dbReference type="SAM" id="MobiDB-lite"/>
    </source>
</evidence>
<evidence type="ECO:0000269" key="5">
    <source>
    </source>
</evidence>
<evidence type="ECO:0000269" key="6">
    <source>
    </source>
</evidence>
<evidence type="ECO:0000303" key="7">
    <source>
    </source>
</evidence>
<evidence type="ECO:0000312" key="8">
    <source>
        <dbReference type="MGI" id="MGI:1309528"/>
    </source>
</evidence>
<evidence type="ECO:0007744" key="9">
    <source>
    </source>
</evidence>
<evidence type="ECO:0007744" key="10">
    <source>
    </source>
</evidence>
<organism>
    <name type="scientific">Mus musculus</name>
    <name type="common">Mouse</name>
    <dbReference type="NCBI Taxonomy" id="10090"/>
    <lineage>
        <taxon>Eukaryota</taxon>
        <taxon>Metazoa</taxon>
        <taxon>Chordata</taxon>
        <taxon>Craniata</taxon>
        <taxon>Vertebrata</taxon>
        <taxon>Euteleostomi</taxon>
        <taxon>Mammalia</taxon>
        <taxon>Eutheria</taxon>
        <taxon>Euarchontoglires</taxon>
        <taxon>Glires</taxon>
        <taxon>Rodentia</taxon>
        <taxon>Myomorpha</taxon>
        <taxon>Muroidea</taxon>
        <taxon>Muridae</taxon>
        <taxon>Murinae</taxon>
        <taxon>Mus</taxon>
        <taxon>Mus</taxon>
    </lineage>
</organism>
<protein>
    <recommendedName>
        <fullName>Protein phosphatase 1 regulatory subunit 12A</fullName>
    </recommendedName>
    <alternativeName>
        <fullName>Myosin phosphatase-targeting subunit 1</fullName>
        <shortName>Myosin phosphatase target subunit 1</shortName>
    </alternativeName>
</protein>
<accession>Q9DBR7</accession>
<accession>Q05A74</accession>
<accession>Q8CBV2</accession>
<accession>Q99NB6</accession>
<proteinExistence type="evidence at protein level"/>
<keyword id="KW-0025">Alternative splicing</keyword>
<keyword id="KW-0040">ANK repeat</keyword>
<keyword id="KW-0963">Cytoplasm</keyword>
<keyword id="KW-0206">Cytoskeleton</keyword>
<keyword id="KW-0379">Hydroxylation</keyword>
<keyword id="KW-0597">Phosphoprotein</keyword>
<keyword id="KW-1185">Reference proteome</keyword>
<keyword id="KW-0677">Repeat</keyword>
<reference key="1">
    <citation type="journal article" date="2005" name="Science">
        <title>The transcriptional landscape of the mammalian genome.</title>
        <authorList>
            <person name="Carninci P."/>
            <person name="Kasukawa T."/>
            <person name="Katayama S."/>
            <person name="Gough J."/>
            <person name="Frith M.C."/>
            <person name="Maeda N."/>
            <person name="Oyama R."/>
            <person name="Ravasi T."/>
            <person name="Lenhard B."/>
            <person name="Wells C."/>
            <person name="Kodzius R."/>
            <person name="Shimokawa K."/>
            <person name="Bajic V.B."/>
            <person name="Brenner S.E."/>
            <person name="Batalov S."/>
            <person name="Forrest A.R."/>
            <person name="Zavolan M."/>
            <person name="Davis M.J."/>
            <person name="Wilming L.G."/>
            <person name="Aidinis V."/>
            <person name="Allen J.E."/>
            <person name="Ambesi-Impiombato A."/>
            <person name="Apweiler R."/>
            <person name="Aturaliya R.N."/>
            <person name="Bailey T.L."/>
            <person name="Bansal M."/>
            <person name="Baxter L."/>
            <person name="Beisel K.W."/>
            <person name="Bersano T."/>
            <person name="Bono H."/>
            <person name="Chalk A.M."/>
            <person name="Chiu K.P."/>
            <person name="Choudhary V."/>
            <person name="Christoffels A."/>
            <person name="Clutterbuck D.R."/>
            <person name="Crowe M.L."/>
            <person name="Dalla E."/>
            <person name="Dalrymple B.P."/>
            <person name="de Bono B."/>
            <person name="Della Gatta G."/>
            <person name="di Bernardo D."/>
            <person name="Down T."/>
            <person name="Engstrom P."/>
            <person name="Fagiolini M."/>
            <person name="Faulkner G."/>
            <person name="Fletcher C.F."/>
            <person name="Fukushima T."/>
            <person name="Furuno M."/>
            <person name="Futaki S."/>
            <person name="Gariboldi M."/>
            <person name="Georgii-Hemming P."/>
            <person name="Gingeras T.R."/>
            <person name="Gojobori T."/>
            <person name="Green R.E."/>
            <person name="Gustincich S."/>
            <person name="Harbers M."/>
            <person name="Hayashi Y."/>
            <person name="Hensch T.K."/>
            <person name="Hirokawa N."/>
            <person name="Hill D."/>
            <person name="Huminiecki L."/>
            <person name="Iacono M."/>
            <person name="Ikeo K."/>
            <person name="Iwama A."/>
            <person name="Ishikawa T."/>
            <person name="Jakt M."/>
            <person name="Kanapin A."/>
            <person name="Katoh M."/>
            <person name="Kawasawa Y."/>
            <person name="Kelso J."/>
            <person name="Kitamura H."/>
            <person name="Kitano H."/>
            <person name="Kollias G."/>
            <person name="Krishnan S.P."/>
            <person name="Kruger A."/>
            <person name="Kummerfeld S.K."/>
            <person name="Kurochkin I.V."/>
            <person name="Lareau L.F."/>
            <person name="Lazarevic D."/>
            <person name="Lipovich L."/>
            <person name="Liu J."/>
            <person name="Liuni S."/>
            <person name="McWilliam S."/>
            <person name="Madan Babu M."/>
            <person name="Madera M."/>
            <person name="Marchionni L."/>
            <person name="Matsuda H."/>
            <person name="Matsuzawa S."/>
            <person name="Miki H."/>
            <person name="Mignone F."/>
            <person name="Miyake S."/>
            <person name="Morris K."/>
            <person name="Mottagui-Tabar S."/>
            <person name="Mulder N."/>
            <person name="Nakano N."/>
            <person name="Nakauchi H."/>
            <person name="Ng P."/>
            <person name="Nilsson R."/>
            <person name="Nishiguchi S."/>
            <person name="Nishikawa S."/>
            <person name="Nori F."/>
            <person name="Ohara O."/>
            <person name="Okazaki Y."/>
            <person name="Orlando V."/>
            <person name="Pang K.C."/>
            <person name="Pavan W.J."/>
            <person name="Pavesi G."/>
            <person name="Pesole G."/>
            <person name="Petrovsky N."/>
            <person name="Piazza S."/>
            <person name="Reed J."/>
            <person name="Reid J.F."/>
            <person name="Ring B.Z."/>
            <person name="Ringwald M."/>
            <person name="Rost B."/>
            <person name="Ruan Y."/>
            <person name="Salzberg S.L."/>
            <person name="Sandelin A."/>
            <person name="Schneider C."/>
            <person name="Schoenbach C."/>
            <person name="Sekiguchi K."/>
            <person name="Semple C.A."/>
            <person name="Seno S."/>
            <person name="Sessa L."/>
            <person name="Sheng Y."/>
            <person name="Shibata Y."/>
            <person name="Shimada H."/>
            <person name="Shimada K."/>
            <person name="Silva D."/>
            <person name="Sinclair B."/>
            <person name="Sperling S."/>
            <person name="Stupka E."/>
            <person name="Sugiura K."/>
            <person name="Sultana R."/>
            <person name="Takenaka Y."/>
            <person name="Taki K."/>
            <person name="Tammoja K."/>
            <person name="Tan S.L."/>
            <person name="Tang S."/>
            <person name="Taylor M.S."/>
            <person name="Tegner J."/>
            <person name="Teichmann S.A."/>
            <person name="Ueda H.R."/>
            <person name="van Nimwegen E."/>
            <person name="Verardo R."/>
            <person name="Wei C.L."/>
            <person name="Yagi K."/>
            <person name="Yamanishi H."/>
            <person name="Zabarovsky E."/>
            <person name="Zhu S."/>
            <person name="Zimmer A."/>
            <person name="Hide W."/>
            <person name="Bult C."/>
            <person name="Grimmond S.M."/>
            <person name="Teasdale R.D."/>
            <person name="Liu E.T."/>
            <person name="Brusic V."/>
            <person name="Quackenbush J."/>
            <person name="Wahlestedt C."/>
            <person name="Mattick J.S."/>
            <person name="Hume D.A."/>
            <person name="Kai C."/>
            <person name="Sasaki D."/>
            <person name="Tomaru Y."/>
            <person name="Fukuda S."/>
            <person name="Kanamori-Katayama M."/>
            <person name="Suzuki M."/>
            <person name="Aoki J."/>
            <person name="Arakawa T."/>
            <person name="Iida J."/>
            <person name="Imamura K."/>
            <person name="Itoh M."/>
            <person name="Kato T."/>
            <person name="Kawaji H."/>
            <person name="Kawagashira N."/>
            <person name="Kawashima T."/>
            <person name="Kojima M."/>
            <person name="Kondo S."/>
            <person name="Konno H."/>
            <person name="Nakano K."/>
            <person name="Ninomiya N."/>
            <person name="Nishio T."/>
            <person name="Okada M."/>
            <person name="Plessy C."/>
            <person name="Shibata K."/>
            <person name="Shiraki T."/>
            <person name="Suzuki S."/>
            <person name="Tagami M."/>
            <person name="Waki K."/>
            <person name="Watahiki A."/>
            <person name="Okamura-Oho Y."/>
            <person name="Suzuki H."/>
            <person name="Kawai J."/>
            <person name="Hayashizaki Y."/>
        </authorList>
    </citation>
    <scope>NUCLEOTIDE SEQUENCE [LARGE SCALE MRNA] (ISOFORM 2)</scope>
    <source>
        <strain>C57BL/6J</strain>
        <tissue>Lung</tissue>
        <tissue>Urinary bladder</tissue>
    </source>
</reference>
<reference key="2">
    <citation type="submission" date="2007-06" db="EMBL/GenBank/DDBJ databases">
        <authorList>
            <person name="Mural R.J."/>
            <person name="Adams M.D."/>
            <person name="Myers E.W."/>
            <person name="Smith H.O."/>
            <person name="Venter J.C."/>
        </authorList>
    </citation>
    <scope>NUCLEOTIDE SEQUENCE [LARGE SCALE GENOMIC DNA]</scope>
</reference>
<reference key="3">
    <citation type="journal article" date="2004" name="Genome Res.">
        <title>The status, quality, and expansion of the NIH full-length cDNA project: the Mammalian Gene Collection (MGC).</title>
        <authorList>
            <consortium name="The MGC Project Team"/>
        </authorList>
    </citation>
    <scope>NUCLEOTIDE SEQUENCE [LARGE SCALE MRNA] (ISOFORM 1)</scope>
    <source>
        <tissue>Brain</tissue>
    </source>
</reference>
<reference key="4">
    <citation type="journal article" date="2001" name="Biochim. Biophys. Acta">
        <title>Molecular cloning and analysis of the 5'-flanking region of human MYPT1 gene.</title>
        <authorList>
            <person name="Machida H."/>
            <person name="Ito M."/>
            <person name="Okamoto R."/>
            <person name="Shiraki K."/>
            <person name="Isaka N."/>
            <person name="Hartshorne D.J."/>
            <person name="Nakano T."/>
        </authorList>
    </citation>
    <scope>NUCLEOTIDE SEQUENCE [GENOMIC DNA] OF 1-79</scope>
</reference>
<reference key="5">
    <citation type="journal article" date="1996" name="Science">
        <title>Regulation of myosin phosphatase by Rho and Rho-associated kinase (Rho-kinase).</title>
        <authorList>
            <person name="Kimura K."/>
            <person name="Ito M."/>
            <person name="Amano M."/>
            <person name="Chihara K."/>
            <person name="Fukata Y."/>
            <person name="Nakafuku M."/>
            <person name="Yamamori B."/>
            <person name="Feng J."/>
            <person name="Nakano T."/>
            <person name="Okawa K."/>
            <person name="Iwamatsu A."/>
            <person name="Kaibuchi K."/>
        </authorList>
    </citation>
    <scope>PHOSPHORYLATION</scope>
    <scope>INTERACTION WITH ARHA AND CIT</scope>
</reference>
<reference key="6">
    <citation type="journal article" date="2007" name="Proc. Natl. Acad. Sci. U.S.A.">
        <title>Large-scale phosphorylation analysis of mouse liver.</title>
        <authorList>
            <person name="Villen J."/>
            <person name="Beausoleil S.A."/>
            <person name="Gerber S.A."/>
            <person name="Gygi S.P."/>
        </authorList>
    </citation>
    <scope>PHOSPHORYLATION [LARGE SCALE ANALYSIS] AT SER-445</scope>
    <scope>IDENTIFICATION BY MASS SPECTROMETRY [LARGE SCALE ANALYSIS]</scope>
    <source>
        <tissue>Liver</tissue>
    </source>
</reference>
<reference key="7">
    <citation type="journal article" date="2010" name="Cell">
        <title>A tissue-specific atlas of mouse protein phosphorylation and expression.</title>
        <authorList>
            <person name="Huttlin E.L."/>
            <person name="Jedrychowski M.P."/>
            <person name="Elias J.E."/>
            <person name="Goswami T."/>
            <person name="Rad R."/>
            <person name="Beausoleil S.A."/>
            <person name="Villen J."/>
            <person name="Haas W."/>
            <person name="Sowa M.E."/>
            <person name="Gygi S.P."/>
        </authorList>
    </citation>
    <scope>PHOSPHORYLATION [LARGE SCALE ANALYSIS] AT SER-299; SER-445; TYR-446; SER-801; SER-861; SER-870 AND SER-994</scope>
    <scope>IDENTIFICATION BY MASS SPECTROMETRY [LARGE SCALE ANALYSIS]</scope>
    <source>
        <tissue>Brain</tissue>
        <tissue>Brown adipose tissue</tissue>
        <tissue>Heart</tissue>
        <tissue>Kidney</tissue>
        <tissue>Liver</tissue>
        <tissue>Lung</tissue>
        <tissue>Pancreas</tissue>
        <tissue>Spleen</tissue>
        <tissue>Testis</tissue>
    </source>
</reference>
<reference key="8">
    <citation type="journal article" date="2010" name="J. Biol. Chem.">
        <title>Smoothelin-like 1 protein regulates myosin phosphatase-targeting subunit 1 expression during sexual development and pregnancy.</title>
        <authorList>
            <person name="Lontay B."/>
            <person name="Bodoor K."/>
            <person name="Weitzel D.H."/>
            <person name="Loiselle D."/>
            <person name="Fortner C."/>
            <person name="Lengyel S."/>
            <person name="Zheng D."/>
            <person name="Devente J."/>
            <person name="Hickner R."/>
            <person name="Haystead T.A."/>
        </authorList>
    </citation>
    <scope>INTERACTION WITH SMTNL1</scope>
    <scope>TISSUE SPECIFICITY</scope>
    <scope>DEVELOPMENTAL STAGE</scope>
</reference>
<reference key="9">
    <citation type="journal article" date="2020" name="Am. J. Hum. Genet.">
        <title>Loss-of-function variants in PPP1R12A: from isolated sex reversal to holoprosencephaly spectrum and urogenital malformations.</title>
        <authorList>
            <person name="Hughes J.J."/>
            <person name="Alkhunaizi E."/>
            <person name="Kruszka P."/>
            <person name="Pyle L.C."/>
            <person name="Grange D.K."/>
            <person name="Berger S.I."/>
            <person name="Payne K.K."/>
            <person name="Masser-Frye D."/>
            <person name="Hu T."/>
            <person name="Christie M.R."/>
            <person name="Clegg N.J."/>
            <person name="Everson J.L."/>
            <person name="Martinez A.F."/>
            <person name="Walsh L.E."/>
            <person name="Bedoukian E."/>
            <person name="Jones M.C."/>
            <person name="Harris C.J."/>
            <person name="Riedhammer K.M."/>
            <person name="Choukair D."/>
            <person name="Fechner P.Y."/>
            <person name="Rutter M.M."/>
            <person name="Hufnagel S.B."/>
            <person name="Roifman M."/>
            <person name="Kletter G.B."/>
            <person name="Delot E."/>
            <person name="Vilain E."/>
            <person name="Lipinski R.J."/>
            <person name="Vezina C.M."/>
            <person name="Muenke M."/>
            <person name="Chitayat D."/>
        </authorList>
    </citation>
    <scope>DEVELOPMENTAL STAGE</scope>
</reference>
<comment type="function">
    <text evidence="2 3">Key regulator of protein phosphatase 1C (PPP1C). Mediates binding to myosin. As part of the PPP1C complex, involved in dephosphorylation of PLK1. Capable of inhibiting HIF1AN-dependent suppression of HIF1A activity (By similarity).</text>
</comment>
<comment type="subunit">
    <text evidence="2">PP1 comprises a catalytic subunit, PPP1CA, PPP1CB or PPP1CC, and one or several targeting or regulatory subunits. PPP1R12A mediates binding to myosin. Interacts with ARHA and CIT (By similarity). Binds PPP1R12B, ROCK1 and IL16. Interacts directly with PRKG1. Non-covalent dimer of 2 dimers; PRKG1-PRKG1 and PPP1R12A-PPP1R12A. Interacts with SMTNL1 (By similarity). Interacts with PPP1CB; the interaction is direct. Interacts (when phosphorylated at Ser-445, Ser-472 and Ser-910) with 14-3-3. Interacts with ROCK1 and ROCK2. Interacts with isoform 1 and isoform 2 of ZIPK/DAPK3. Interacts with RAF1. Interacts with HIF1AN (By similarity). Interacts with NCKAP1L (By similarity).</text>
</comment>
<comment type="interaction">
    <interactant intactId="EBI-1014335">
        <id>Q9DBR7</id>
    </interactant>
    <interactant intactId="EBI-15699851">
        <id>P0C605-1</id>
        <label>Prkg1</label>
    </interactant>
    <organismsDiffer>false</organismsDiffer>
    <experiments>2</experiments>
</comment>
<comment type="subcellular location">
    <subcellularLocation>
        <location evidence="2">Cytoplasm</location>
    </subcellularLocation>
    <subcellularLocation>
        <location evidence="2">Cytoplasm</location>
        <location evidence="2">Cytoskeleton</location>
        <location evidence="2">Stress fiber</location>
    </subcellularLocation>
    <text evidence="2">Also along actomyosin filaments.</text>
</comment>
<comment type="alternative products">
    <event type="alternative splicing"/>
    <isoform>
        <id>Q9DBR7-1</id>
        <name>1</name>
        <sequence type="displayed"/>
    </isoform>
    <isoform>
        <id>Q9DBR7-2</id>
        <name>2</name>
        <sequence type="described" ref="VSP_038478"/>
    </isoform>
</comment>
<comment type="tissue specificity">
    <text evidence="5">Expressed in striated and vascular smooth muscle, specificcally in type 2a fibers (at protein level). Expression levels are 20-30% higher in developed males than females (at protein level).</text>
</comment>
<comment type="developmental stage">
    <text evidence="5 6">In neonates, expressed at low levels in striated and smooth muscles. As the animals mature sexually, expression increases 10-20-fold. Pregnancy promotes a 2-3-fold increase in expression in striated, vascular and uterine muscle (at protein level). Expressed in the prosencephalic neural folds at 8.5 dpc. Expressed in the lower urinary tract, specifically in epitheliumof the bladder, urethra, and genital tubercle at 13.5 dpc (PubMed:31883643).</text>
</comment>
<comment type="domain">
    <text evidence="1">Heterotetramerization is mediated by the interaction between a coiled-coil of PRKG1 and the leucine/isoleucine zipper of PPP1R12A/MBS, the myosin-binding subunit of the myosin phosphatase.</text>
</comment>
<comment type="domain">
    <text evidence="2">The KVKF motif mediates interaction with PPP1CB.</text>
</comment>
<comment type="PTM">
    <text evidence="2">Phosphorylated by CIT (Rho-associated kinase) (By similarity). Phosphorylated cooperatively by ROCK1 and CDC42BP on Thr-694 (By similarity). Phosphorylated on upon DNA damage, probably by ATM or ATR. In vitro, phosphorylation of Ser-693 by PKA and PKG appears to prevent phosphorylation of the inhibitory site Thr-694, probably mediated by PRKG1. Phosphorylation at Ser-445, Ser-472 and Ser-909 by NUAK1 promotes interaction with 14-3-3, leading to inhibit interaction with myosin light chain MLC2, preventing dephosphorylation of MLC2. May be phosphorylated at Thr-694 by DMPK; may inhibit the myosin phosphatase activity (By similarity). Phosphorylated at Ser-473 by CDK1 during mitosis, creating docking sites for the POLO box domains of PLK1. Subsequently, PLK1 binds and phosphorylates PPP1R12A (By similarity).</text>
</comment>
<name>MYPT1_MOUSE</name>